<feature type="chain" id="PRO_0000126936" description="Phenylalanine--tRNA ligase beta subunit">
    <location>
        <begin position="1"/>
        <end position="802"/>
    </location>
</feature>
<feature type="domain" description="tRNA-binding" evidence="1">
    <location>
        <begin position="38"/>
        <end position="149"/>
    </location>
</feature>
<feature type="domain" description="B5" evidence="1">
    <location>
        <begin position="399"/>
        <end position="474"/>
    </location>
</feature>
<feature type="domain" description="FDX-ACB" evidence="1">
    <location>
        <begin position="708"/>
        <end position="801"/>
    </location>
</feature>
<feature type="binding site" evidence="1">
    <location>
        <position position="452"/>
    </location>
    <ligand>
        <name>Mg(2+)</name>
        <dbReference type="ChEBI" id="CHEBI:18420"/>
        <note>shared with alpha subunit</note>
    </ligand>
</feature>
<feature type="binding site" evidence="1">
    <location>
        <position position="458"/>
    </location>
    <ligand>
        <name>Mg(2+)</name>
        <dbReference type="ChEBI" id="CHEBI:18420"/>
        <note>shared with alpha subunit</note>
    </ligand>
</feature>
<feature type="binding site" evidence="1">
    <location>
        <position position="461"/>
    </location>
    <ligand>
        <name>Mg(2+)</name>
        <dbReference type="ChEBI" id="CHEBI:18420"/>
        <note>shared with alpha subunit</note>
    </ligand>
</feature>
<feature type="binding site" evidence="1">
    <location>
        <position position="462"/>
    </location>
    <ligand>
        <name>Mg(2+)</name>
        <dbReference type="ChEBI" id="CHEBI:18420"/>
        <note>shared with alpha subunit</note>
    </ligand>
</feature>
<organism>
    <name type="scientific">Mesorhizobium japonicum (strain LMG 29417 / CECT 9101 / MAFF 303099)</name>
    <name type="common">Mesorhizobium loti (strain MAFF 303099)</name>
    <dbReference type="NCBI Taxonomy" id="266835"/>
    <lineage>
        <taxon>Bacteria</taxon>
        <taxon>Pseudomonadati</taxon>
        <taxon>Pseudomonadota</taxon>
        <taxon>Alphaproteobacteria</taxon>
        <taxon>Hyphomicrobiales</taxon>
        <taxon>Phyllobacteriaceae</taxon>
        <taxon>Mesorhizobium</taxon>
    </lineage>
</organism>
<reference key="1">
    <citation type="journal article" date="2000" name="DNA Res.">
        <title>Complete genome structure of the nitrogen-fixing symbiotic bacterium Mesorhizobium loti.</title>
        <authorList>
            <person name="Kaneko T."/>
            <person name="Nakamura Y."/>
            <person name="Sato S."/>
            <person name="Asamizu E."/>
            <person name="Kato T."/>
            <person name="Sasamoto S."/>
            <person name="Watanabe A."/>
            <person name="Idesawa K."/>
            <person name="Ishikawa A."/>
            <person name="Kawashima K."/>
            <person name="Kimura T."/>
            <person name="Kishida Y."/>
            <person name="Kiyokawa C."/>
            <person name="Kohara M."/>
            <person name="Matsumoto M."/>
            <person name="Matsuno A."/>
            <person name="Mochizuki Y."/>
            <person name="Nakayama S."/>
            <person name="Nakazaki N."/>
            <person name="Shimpo S."/>
            <person name="Sugimoto M."/>
            <person name="Takeuchi C."/>
            <person name="Yamada M."/>
            <person name="Tabata S."/>
        </authorList>
    </citation>
    <scope>NUCLEOTIDE SEQUENCE [LARGE SCALE GENOMIC DNA]</scope>
    <source>
        <strain>LMG 29417 / CECT 9101 / MAFF 303099</strain>
    </source>
</reference>
<sequence length="802" mass="85169">MKFTLSWLKDHLETDASLDEIVERLTSIGLEVEHVDDKSSLKPFVIAKVLTAVQHPDADRLRVLTVDTGDGKSPVQVVCGAPNARAGLIGAFAAPGTYVPGIDVTLTVGKIRGVESHGMMCSERELELSDEHNGIIDLPADAPVGTSFASYAHLDDPVIEINLTPNRPDATSVYGIARDLAASGLGTLKSAAVEKIPGKGETPVKVVIEAPELCPGFALRLVRGVKNGPSPKWLQQRLIAIGLRPISALVDITNYVTFDRGRPLHVFDARKVAGNLVVRRAHDGEKVMALDGREYTLTPDMCAIADDNGVESIAGVMGGEHSGCDENTTDVLIESALWDPITTARTGRTLGIITDARYRFERGVDPEFMVPGVELATRLVLDLCGGEPAETEVVGYAGHKPKIVSFPISEVTRLTGIEVPKEESLDILSRLGFKPQGSSEVVDVALPSWRPDVDGKADLVEEVMRIHGVDNIAPQPLGAHDAVNSKILTTLQVRTRTAKRALAVRGMMEAVTWSFIPAKHAELFGGGQTALKLANPIAADMSDMRPSLLPGLIAAAQRNADKGIGDVALFEVSGTYEGDGADQQRRVAAGVRRGTAKLDGSGRSWAGNSGPVGVFDAKADAIAALEACGAPVERLQIEAGGPAWYHPGRSGTIKLGPKTVLGTFGEFHPKTMEGLDVSGPLCGFEVFVDAVPEPKAKPTKTKPKLELSAFQAVKRDFAFVVDKAVEAGTLVRAALAADKKLITAVSVFDIFEGASLGADKKSIAIEVSIQPVEKTLTDEDFEALAKRVVENVGKQTGGVLRG</sequence>
<gene>
    <name evidence="1" type="primary">pheT</name>
    <name type="ordered locus">mll5053</name>
</gene>
<dbReference type="EC" id="6.1.1.20" evidence="1"/>
<dbReference type="EMBL" id="BA000012">
    <property type="protein sequence ID" value="BAB51570.1"/>
    <property type="molecule type" value="Genomic_DNA"/>
</dbReference>
<dbReference type="RefSeq" id="WP_010912911.1">
    <property type="nucleotide sequence ID" value="NC_002678.2"/>
</dbReference>
<dbReference type="SMR" id="Q98CQ1"/>
<dbReference type="KEGG" id="mlo:mll5053"/>
<dbReference type="PATRIC" id="fig|266835.9.peg.3992"/>
<dbReference type="eggNOG" id="COG0072">
    <property type="taxonomic scope" value="Bacteria"/>
</dbReference>
<dbReference type="eggNOG" id="COG0073">
    <property type="taxonomic scope" value="Bacteria"/>
</dbReference>
<dbReference type="HOGENOM" id="CLU_016891_0_0_5"/>
<dbReference type="Proteomes" id="UP000000552">
    <property type="component" value="Chromosome"/>
</dbReference>
<dbReference type="GO" id="GO:0009328">
    <property type="term" value="C:phenylalanine-tRNA ligase complex"/>
    <property type="evidence" value="ECO:0007669"/>
    <property type="project" value="TreeGrafter"/>
</dbReference>
<dbReference type="GO" id="GO:0005524">
    <property type="term" value="F:ATP binding"/>
    <property type="evidence" value="ECO:0007669"/>
    <property type="project" value="UniProtKB-UniRule"/>
</dbReference>
<dbReference type="GO" id="GO:0000287">
    <property type="term" value="F:magnesium ion binding"/>
    <property type="evidence" value="ECO:0007669"/>
    <property type="project" value="UniProtKB-UniRule"/>
</dbReference>
<dbReference type="GO" id="GO:0004826">
    <property type="term" value="F:phenylalanine-tRNA ligase activity"/>
    <property type="evidence" value="ECO:0007669"/>
    <property type="project" value="UniProtKB-UniRule"/>
</dbReference>
<dbReference type="GO" id="GO:0000049">
    <property type="term" value="F:tRNA binding"/>
    <property type="evidence" value="ECO:0007669"/>
    <property type="project" value="UniProtKB-KW"/>
</dbReference>
<dbReference type="GO" id="GO:0006432">
    <property type="term" value="P:phenylalanyl-tRNA aminoacylation"/>
    <property type="evidence" value="ECO:0007669"/>
    <property type="project" value="UniProtKB-UniRule"/>
</dbReference>
<dbReference type="CDD" id="cd00769">
    <property type="entry name" value="PheRS_beta_core"/>
    <property type="match status" value="1"/>
</dbReference>
<dbReference type="CDD" id="cd02796">
    <property type="entry name" value="tRNA_bind_bactPheRS"/>
    <property type="match status" value="1"/>
</dbReference>
<dbReference type="FunFam" id="2.40.50.140:FF:000045">
    <property type="entry name" value="Phenylalanine--tRNA ligase beta subunit"/>
    <property type="match status" value="1"/>
</dbReference>
<dbReference type="FunFam" id="3.50.40.10:FF:000001">
    <property type="entry name" value="Phenylalanine--tRNA ligase beta subunit"/>
    <property type="match status" value="1"/>
</dbReference>
<dbReference type="Gene3D" id="3.30.56.10">
    <property type="match status" value="2"/>
</dbReference>
<dbReference type="Gene3D" id="3.30.930.10">
    <property type="entry name" value="Bira Bifunctional Protein, Domain 2"/>
    <property type="match status" value="1"/>
</dbReference>
<dbReference type="Gene3D" id="3.30.70.380">
    <property type="entry name" value="Ferrodoxin-fold anticodon-binding domain"/>
    <property type="match status" value="1"/>
</dbReference>
<dbReference type="Gene3D" id="2.40.50.140">
    <property type="entry name" value="Nucleic acid-binding proteins"/>
    <property type="match status" value="1"/>
</dbReference>
<dbReference type="Gene3D" id="3.50.40.10">
    <property type="entry name" value="Phenylalanyl-trna Synthetase, Chain B, domain 3"/>
    <property type="match status" value="1"/>
</dbReference>
<dbReference type="HAMAP" id="MF_00283">
    <property type="entry name" value="Phe_tRNA_synth_beta1"/>
    <property type="match status" value="1"/>
</dbReference>
<dbReference type="InterPro" id="IPR045864">
    <property type="entry name" value="aa-tRNA-synth_II/BPL/LPL"/>
</dbReference>
<dbReference type="InterPro" id="IPR005146">
    <property type="entry name" value="B3/B4_tRNA-bd"/>
</dbReference>
<dbReference type="InterPro" id="IPR009061">
    <property type="entry name" value="DNA-bd_dom_put_sf"/>
</dbReference>
<dbReference type="InterPro" id="IPR005121">
    <property type="entry name" value="Fdx_antiC-bd"/>
</dbReference>
<dbReference type="InterPro" id="IPR036690">
    <property type="entry name" value="Fdx_antiC-bd_sf"/>
</dbReference>
<dbReference type="InterPro" id="IPR012340">
    <property type="entry name" value="NA-bd_OB-fold"/>
</dbReference>
<dbReference type="InterPro" id="IPR045060">
    <property type="entry name" value="Phe-tRNA-ligase_IIc_bsu"/>
</dbReference>
<dbReference type="InterPro" id="IPR004532">
    <property type="entry name" value="Phe-tRNA-ligase_IIc_bsu_bact"/>
</dbReference>
<dbReference type="InterPro" id="IPR020825">
    <property type="entry name" value="Phe-tRNA_synthase-like_B3/B4"/>
</dbReference>
<dbReference type="InterPro" id="IPR041616">
    <property type="entry name" value="PheRS_beta_core"/>
</dbReference>
<dbReference type="InterPro" id="IPR002547">
    <property type="entry name" value="tRNA-bd_dom"/>
</dbReference>
<dbReference type="InterPro" id="IPR033714">
    <property type="entry name" value="tRNA_bind_bactPheRS"/>
</dbReference>
<dbReference type="InterPro" id="IPR005147">
    <property type="entry name" value="tRNA_synthase_B5-dom"/>
</dbReference>
<dbReference type="NCBIfam" id="TIGR00472">
    <property type="entry name" value="pheT_bact"/>
    <property type="match status" value="1"/>
</dbReference>
<dbReference type="NCBIfam" id="NF045760">
    <property type="entry name" value="YtpR"/>
    <property type="match status" value="1"/>
</dbReference>
<dbReference type="PANTHER" id="PTHR10947:SF0">
    <property type="entry name" value="PHENYLALANINE--TRNA LIGASE BETA SUBUNIT"/>
    <property type="match status" value="1"/>
</dbReference>
<dbReference type="PANTHER" id="PTHR10947">
    <property type="entry name" value="PHENYLALANYL-TRNA SYNTHETASE BETA CHAIN AND LEUCINE-RICH REPEAT-CONTAINING PROTEIN 47"/>
    <property type="match status" value="1"/>
</dbReference>
<dbReference type="Pfam" id="PF03483">
    <property type="entry name" value="B3_4"/>
    <property type="match status" value="1"/>
</dbReference>
<dbReference type="Pfam" id="PF03484">
    <property type="entry name" value="B5"/>
    <property type="match status" value="1"/>
</dbReference>
<dbReference type="Pfam" id="PF03147">
    <property type="entry name" value="FDX-ACB"/>
    <property type="match status" value="1"/>
</dbReference>
<dbReference type="Pfam" id="PF01588">
    <property type="entry name" value="tRNA_bind"/>
    <property type="match status" value="1"/>
</dbReference>
<dbReference type="Pfam" id="PF17759">
    <property type="entry name" value="tRNA_synthFbeta"/>
    <property type="match status" value="1"/>
</dbReference>
<dbReference type="SMART" id="SM00873">
    <property type="entry name" value="B3_4"/>
    <property type="match status" value="1"/>
</dbReference>
<dbReference type="SMART" id="SM00874">
    <property type="entry name" value="B5"/>
    <property type="match status" value="1"/>
</dbReference>
<dbReference type="SMART" id="SM00896">
    <property type="entry name" value="FDX-ACB"/>
    <property type="match status" value="1"/>
</dbReference>
<dbReference type="SUPFAM" id="SSF54991">
    <property type="entry name" value="Anticodon-binding domain of PheRS"/>
    <property type="match status" value="1"/>
</dbReference>
<dbReference type="SUPFAM" id="SSF55681">
    <property type="entry name" value="Class II aaRS and biotin synthetases"/>
    <property type="match status" value="1"/>
</dbReference>
<dbReference type="SUPFAM" id="SSF50249">
    <property type="entry name" value="Nucleic acid-binding proteins"/>
    <property type="match status" value="1"/>
</dbReference>
<dbReference type="SUPFAM" id="SSF56037">
    <property type="entry name" value="PheT/TilS domain"/>
    <property type="match status" value="1"/>
</dbReference>
<dbReference type="SUPFAM" id="SSF46955">
    <property type="entry name" value="Putative DNA-binding domain"/>
    <property type="match status" value="1"/>
</dbReference>
<dbReference type="PROSITE" id="PS51483">
    <property type="entry name" value="B5"/>
    <property type="match status" value="1"/>
</dbReference>
<dbReference type="PROSITE" id="PS51447">
    <property type="entry name" value="FDX_ACB"/>
    <property type="match status" value="1"/>
</dbReference>
<dbReference type="PROSITE" id="PS50886">
    <property type="entry name" value="TRBD"/>
    <property type="match status" value="1"/>
</dbReference>
<evidence type="ECO:0000255" key="1">
    <source>
        <dbReference type="HAMAP-Rule" id="MF_00283"/>
    </source>
</evidence>
<comment type="catalytic activity">
    <reaction evidence="1">
        <text>tRNA(Phe) + L-phenylalanine + ATP = L-phenylalanyl-tRNA(Phe) + AMP + diphosphate + H(+)</text>
        <dbReference type="Rhea" id="RHEA:19413"/>
        <dbReference type="Rhea" id="RHEA-COMP:9668"/>
        <dbReference type="Rhea" id="RHEA-COMP:9699"/>
        <dbReference type="ChEBI" id="CHEBI:15378"/>
        <dbReference type="ChEBI" id="CHEBI:30616"/>
        <dbReference type="ChEBI" id="CHEBI:33019"/>
        <dbReference type="ChEBI" id="CHEBI:58095"/>
        <dbReference type="ChEBI" id="CHEBI:78442"/>
        <dbReference type="ChEBI" id="CHEBI:78531"/>
        <dbReference type="ChEBI" id="CHEBI:456215"/>
        <dbReference type="EC" id="6.1.1.20"/>
    </reaction>
</comment>
<comment type="cofactor">
    <cofactor evidence="1">
        <name>Mg(2+)</name>
        <dbReference type="ChEBI" id="CHEBI:18420"/>
    </cofactor>
    <text evidence="1">Binds 2 magnesium ions per tetramer.</text>
</comment>
<comment type="subunit">
    <text evidence="1">Tetramer of two alpha and two beta subunits.</text>
</comment>
<comment type="subcellular location">
    <subcellularLocation>
        <location evidence="1">Cytoplasm</location>
    </subcellularLocation>
</comment>
<comment type="similarity">
    <text evidence="1">Belongs to the phenylalanyl-tRNA synthetase beta subunit family. Type 1 subfamily.</text>
</comment>
<accession>Q98CQ1</accession>
<keyword id="KW-0030">Aminoacyl-tRNA synthetase</keyword>
<keyword id="KW-0067">ATP-binding</keyword>
<keyword id="KW-0963">Cytoplasm</keyword>
<keyword id="KW-0436">Ligase</keyword>
<keyword id="KW-0460">Magnesium</keyword>
<keyword id="KW-0479">Metal-binding</keyword>
<keyword id="KW-0547">Nucleotide-binding</keyword>
<keyword id="KW-0648">Protein biosynthesis</keyword>
<keyword id="KW-0694">RNA-binding</keyword>
<keyword id="KW-0820">tRNA-binding</keyword>
<protein>
    <recommendedName>
        <fullName evidence="1">Phenylalanine--tRNA ligase beta subunit</fullName>
        <ecNumber evidence="1">6.1.1.20</ecNumber>
    </recommendedName>
    <alternativeName>
        <fullName evidence="1">Phenylalanyl-tRNA synthetase beta subunit</fullName>
        <shortName evidence="1">PheRS</shortName>
    </alternativeName>
</protein>
<proteinExistence type="inferred from homology"/>
<name>SYFB_RHILO</name>